<feature type="chain" id="PRO_0000199101" description="Allophycocyanin beta chain">
    <location>
        <begin position="1"/>
        <end position="161"/>
    </location>
</feature>
<feature type="binding site" evidence="2">
    <location>
        <position position="66"/>
    </location>
    <ligand>
        <name>(2R,3E)-phycocyanobilin</name>
        <dbReference type="ChEBI" id="CHEBI:85275"/>
    </ligand>
</feature>
<feature type="binding site" evidence="2">
    <location>
        <position position="71"/>
    </location>
    <ligand>
        <name>(2R,3E)-phycocyanobilin</name>
        <dbReference type="ChEBI" id="CHEBI:85275"/>
    </ligand>
</feature>
<feature type="binding site" evidence="2">
    <location>
        <position position="76"/>
    </location>
    <ligand>
        <name>(2R,3E)-phycocyanobilin</name>
        <dbReference type="ChEBI" id="CHEBI:85275"/>
    </ligand>
</feature>
<feature type="binding site">
    <location>
        <begin position="81"/>
        <end position="84"/>
    </location>
    <ligand>
        <name>(2R,3E)-phycocyanobilin</name>
        <dbReference type="ChEBI" id="CHEBI:85275"/>
    </ligand>
</feature>
<feature type="binding site" description="covalent" evidence="2">
    <location>
        <position position="81"/>
    </location>
    <ligand>
        <name>(2R,3E)-phycocyanobilin</name>
        <dbReference type="ChEBI" id="CHEBI:85275"/>
    </ligand>
</feature>
<feature type="modified residue" description="N4-methylasparagine" evidence="1">
    <location>
        <position position="71"/>
    </location>
</feature>
<feature type="helix" evidence="4">
    <location>
        <begin position="4"/>
        <end position="13"/>
    </location>
</feature>
<feature type="turn" evidence="4">
    <location>
        <begin position="14"/>
        <end position="16"/>
    </location>
</feature>
<feature type="helix" evidence="4">
    <location>
        <begin position="21"/>
        <end position="46"/>
    </location>
</feature>
<feature type="helix" evidence="4">
    <location>
        <begin position="48"/>
        <end position="59"/>
    </location>
</feature>
<feature type="turn" evidence="4">
    <location>
        <begin position="60"/>
        <end position="62"/>
    </location>
</feature>
<feature type="helix" evidence="4">
    <location>
        <begin position="64"/>
        <end position="66"/>
    </location>
</feature>
<feature type="helix" evidence="4">
    <location>
        <begin position="75"/>
        <end position="98"/>
    </location>
</feature>
<feature type="helix" evidence="4">
    <location>
        <begin position="102"/>
        <end position="107"/>
    </location>
</feature>
<feature type="helix" evidence="4">
    <location>
        <begin position="112"/>
        <end position="119"/>
    </location>
</feature>
<feature type="helix" evidence="4">
    <location>
        <begin position="123"/>
        <end position="141"/>
    </location>
</feature>
<feature type="helix" evidence="4">
    <location>
        <begin position="143"/>
        <end position="160"/>
    </location>
</feature>
<keyword id="KW-0002">3D-structure</keyword>
<keyword id="KW-0042">Antenna complex</keyword>
<keyword id="KW-0089">Bile pigment</keyword>
<keyword id="KW-0150">Chloroplast</keyword>
<keyword id="KW-0157">Chromophore</keyword>
<keyword id="KW-0249">Electron transport</keyword>
<keyword id="KW-0472">Membrane</keyword>
<keyword id="KW-0488">Methylation</keyword>
<keyword id="KW-0602">Photosynthesis</keyword>
<keyword id="KW-0605">Phycobilisome</keyword>
<keyword id="KW-0934">Plastid</keyword>
<keyword id="KW-0793">Thylakoid</keyword>
<keyword id="KW-0813">Transport</keyword>
<geneLocation type="chloroplast"/>
<comment type="function">
    <text>Light-harvesting photosynthetic tetrapyrrole chromophore-protein from the phycobiliprotein complex.</text>
</comment>
<comment type="subunit">
    <text evidence="2">Heterododecamer of 6 alpha and 6 beta chains. The basic functional unit of phycobiliproteins is a ring-shaped hexamer formed from two back-to-back trimers contacting via the alpha chain subunits. The trimers are composed of alpha/beta subunit heterodimers arranged around a three-fold axis of symmetry. The phycoerythrins also contain a gamma subunit which is located in the center of the hexamer.</text>
</comment>
<comment type="subcellular location">
    <subcellularLocation>
        <location>Plastid</location>
        <location>Chloroplast thylakoid membrane</location>
        <topology>Peripheral membrane protein</topology>
        <orientation>Stromal side</orientation>
    </subcellularLocation>
    <text>Forms the core of the phycobilisome.</text>
</comment>
<comment type="PTM">
    <text>Contains one covalently linked phycocyanobilin chromophore.</text>
</comment>
<comment type="miscellaneous">
    <text>The light-harvesting antenna system in red algae and cyanobacteria is formed of phycobilisomes. These are composed of the phycobiliproteins phycoerythrin (CPE), phycocyanin (CPC) and allophycocyanin (APC). Cyanobacteria also contain phycoerythrocyanin (PCC). The phycobiliproteins all share the same subunit composition and organization with variations in the covalently bound open-chain tetrapyrrole chromophores. The phycobiliprotein complexes are arranged sequentially in antenna complexes linked by linker proteins with CPE at the periphery, CPC in the middle and APC at the core feeding to the photosynthetic reaction center. Allophycocyanin has a maximum absorption at approximately 650 nanometers.</text>
</comment>
<comment type="similarity">
    <text evidence="3">Belongs to the phycobiliprotein family.</text>
</comment>
<comment type="caution">
    <text evidence="3">Neither a protein sequence nor a nucleotide sequence has been determined for this protein. This is the sequence of a model fit to electron density plots at 2.2 Angstroms resolution. The N-methylasparagine modification was omitted in the model.</text>
</comment>
<gene>
    <name type="primary">apcB</name>
</gene>
<organism>
    <name type="scientific">Pyropia yezoensis</name>
    <name type="common">Susabi-nori</name>
    <name type="synonym">Porphyra yezoensis</name>
    <dbReference type="NCBI Taxonomy" id="2788"/>
    <lineage>
        <taxon>Eukaryota</taxon>
        <taxon>Rhodophyta</taxon>
        <taxon>Bangiophyceae</taxon>
        <taxon>Bangiales</taxon>
        <taxon>Bangiaceae</taxon>
        <taxon>Pyropia</taxon>
    </lineage>
</organism>
<proteinExistence type="evidence at protein level"/>
<accession>P59857</accession>
<accession>Q1XDM6</accession>
<name>APCB_PYRYE</name>
<dbReference type="EMBL" id="AP006715">
    <property type="protein sequence ID" value="BAE92385.1"/>
    <property type="molecule type" value="Genomic_DNA"/>
</dbReference>
<dbReference type="RefSeq" id="YP_536942.1">
    <property type="nucleotide sequence ID" value="NC_007932.1"/>
</dbReference>
<dbReference type="PDB" id="1KN1">
    <property type="method" value="X-ray"/>
    <property type="resolution" value="2.20 A"/>
    <property type="chains" value="B=1-161"/>
</dbReference>
<dbReference type="PDBsum" id="1KN1"/>
<dbReference type="SMR" id="P59857"/>
<dbReference type="GeneID" id="3978964"/>
<dbReference type="EvolutionaryTrace" id="P59857"/>
<dbReference type="GO" id="GO:0009535">
    <property type="term" value="C:chloroplast thylakoid membrane"/>
    <property type="evidence" value="ECO:0007669"/>
    <property type="project" value="UniProtKB-SubCell"/>
</dbReference>
<dbReference type="GO" id="GO:0030089">
    <property type="term" value="C:phycobilisome"/>
    <property type="evidence" value="ECO:0007669"/>
    <property type="project" value="UniProtKB-KW"/>
</dbReference>
<dbReference type="GO" id="GO:0015979">
    <property type="term" value="P:photosynthesis"/>
    <property type="evidence" value="ECO:0007669"/>
    <property type="project" value="UniProtKB-KW"/>
</dbReference>
<dbReference type="CDD" id="cd12126">
    <property type="entry name" value="APC_beta"/>
    <property type="match status" value="1"/>
</dbReference>
<dbReference type="Gene3D" id="1.10.490.20">
    <property type="entry name" value="Phycocyanins"/>
    <property type="match status" value="1"/>
</dbReference>
<dbReference type="InterPro" id="IPR006245">
    <property type="entry name" value="Allophycocyanin_b"/>
</dbReference>
<dbReference type="InterPro" id="IPR009050">
    <property type="entry name" value="Globin-like_sf"/>
</dbReference>
<dbReference type="InterPro" id="IPR012128">
    <property type="entry name" value="Phycobilisome_asu/bsu"/>
</dbReference>
<dbReference type="InterPro" id="IPR038719">
    <property type="entry name" value="Phycobilisome_asu/bsu_sf"/>
</dbReference>
<dbReference type="NCBIfam" id="TIGR01337">
    <property type="entry name" value="apcB"/>
    <property type="match status" value="1"/>
</dbReference>
<dbReference type="PANTHER" id="PTHR34011:SF3">
    <property type="entry name" value="ALLOPHYCOCYANIN BETA CHAIN"/>
    <property type="match status" value="1"/>
</dbReference>
<dbReference type="PANTHER" id="PTHR34011">
    <property type="entry name" value="PHYCOBILISOME 32.1 KDA LINKER POLYPEPTIDE, PHYCOCYANIN-ASSOCIATED, ROD 2-RELATED"/>
    <property type="match status" value="1"/>
</dbReference>
<dbReference type="Pfam" id="PF00502">
    <property type="entry name" value="Phycobilisome"/>
    <property type="match status" value="1"/>
</dbReference>
<dbReference type="PIRSF" id="PIRSF000081">
    <property type="entry name" value="Phycocyanin"/>
    <property type="match status" value="1"/>
</dbReference>
<dbReference type="SUPFAM" id="SSF46458">
    <property type="entry name" value="Globin-like"/>
    <property type="match status" value="1"/>
</dbReference>
<reference key="1">
    <citation type="submission" date="2003-11" db="EMBL/GenBank/DDBJ databases">
        <title>Whole genome sequence of Porphyra yezoensis chloroplast.</title>
        <authorList>
            <person name="Kunimoto M."/>
            <person name="Morishima K."/>
            <person name="Yoshikawa M."/>
            <person name="Fukuda S."/>
            <person name="Kobayashi T."/>
            <person name="Kobayashi M."/>
            <person name="Okazaki T."/>
            <person name="Ohara I."/>
            <person name="Nakayama I."/>
        </authorList>
    </citation>
    <scope>NUCLEOTIDE SEQUENCE [LARGE SCALE GENOMIC DNA]</scope>
    <source>
        <strain>U-51</strain>
    </source>
</reference>
<reference key="2">
    <citation type="journal article" date="1998" name="Acta Crystallogr. D">
        <title>Crystallization and preliminary X-ray studies of allophycocyanin from red alga Porphyra yezoensis.</title>
        <authorList>
            <person name="Liu J.-Y."/>
            <person name="Zhang J.-P."/>
            <person name="Wan Z.-L."/>
            <person name="Liang D.-C."/>
            <person name="Zhang J.-P."/>
            <person name="Wu H.-J."/>
        </authorList>
    </citation>
    <scope>CRYSTALLIZATION</scope>
</reference>
<reference key="3">
    <citation type="journal article" date="1999" name="J. Biol. Chem.">
        <title>Crystal structure of allophycocyanin from red algae Porphyra yezoensis at 2.2-A resolution.</title>
        <authorList>
            <person name="Liu J.-Y."/>
            <person name="Jiang T."/>
            <person name="Zhang J.-P."/>
            <person name="Liang D.-C."/>
        </authorList>
    </citation>
    <scope>X-RAY CRYSTALLOGRAPHY (2.2 ANGSTROMS) IN COMPLEX WITH APCA AND PHYCOCYANOBILIN</scope>
    <scope>SUBUNIT</scope>
</reference>
<evidence type="ECO:0000250" key="1"/>
<evidence type="ECO:0000269" key="2">
    <source>
    </source>
</evidence>
<evidence type="ECO:0000305" key="3"/>
<evidence type="ECO:0007829" key="4">
    <source>
        <dbReference type="PDB" id="1KN1"/>
    </source>
</evidence>
<sequence length="161" mass="17484">MQDAITSVINAADVQGKYLDDSSVEKLRGYFQTGELRVRAAATIAANAATIIKESVAKSLLYSDITRPGGNMYTTRRYAACIRDLDYYLRYATYGMLAGDPSILEERVLNGLKETYNSLGVPIGATIQAILAMKEVTISLVGPDAGKEMGLYFDYICSGLS</sequence>
<protein>
    <recommendedName>
        <fullName>Allophycocyanin beta chain</fullName>
    </recommendedName>
</protein>